<name>MVP_LEIBR</name>
<gene>
    <name type="ORF">LBRM_05_0060</name>
</gene>
<protein>
    <recommendedName>
        <fullName>Major vault protein</fullName>
    </recommendedName>
</protein>
<dbReference type="EMBL" id="FR798979">
    <property type="protein sequence ID" value="CAM36840.1"/>
    <property type="molecule type" value="Genomic_DNA"/>
</dbReference>
<dbReference type="RefSeq" id="XP_001561821.1">
    <property type="nucleotide sequence ID" value="XM_001561771.1"/>
</dbReference>
<dbReference type="SMR" id="A4H452"/>
<dbReference type="STRING" id="5660.A4H452"/>
<dbReference type="GeneID" id="5412774"/>
<dbReference type="KEGG" id="lbz:LBRM_05_0060"/>
<dbReference type="VEuPathDB" id="TriTrypDB:LbrM.05.0060"/>
<dbReference type="InParanoid" id="A4H452"/>
<dbReference type="OMA" id="VTYRAPH"/>
<dbReference type="Proteomes" id="UP000007258">
    <property type="component" value="Chromosome 5"/>
</dbReference>
<dbReference type="GO" id="GO:0005737">
    <property type="term" value="C:cytoplasm"/>
    <property type="evidence" value="ECO:0007669"/>
    <property type="project" value="UniProtKB-SubCell"/>
</dbReference>
<dbReference type="GO" id="GO:0005634">
    <property type="term" value="C:nucleus"/>
    <property type="evidence" value="ECO:0007669"/>
    <property type="project" value="UniProtKB-SubCell"/>
</dbReference>
<dbReference type="GO" id="GO:1990904">
    <property type="term" value="C:ribonucleoprotein complex"/>
    <property type="evidence" value="ECO:0007669"/>
    <property type="project" value="UniProtKB-KW"/>
</dbReference>
<dbReference type="CDD" id="cd08825">
    <property type="entry name" value="MVP_shoulder"/>
    <property type="match status" value="1"/>
</dbReference>
<dbReference type="FunFam" id="2.30.30.620:FF:000002">
    <property type="entry name" value="Major vault protein"/>
    <property type="match status" value="1"/>
</dbReference>
<dbReference type="FunFam" id="2.30.30.560:FF:000002">
    <property type="entry name" value="Major vault protein-alpha"/>
    <property type="match status" value="1"/>
</dbReference>
<dbReference type="FunFam" id="2.30.30.570:FF:000002">
    <property type="entry name" value="Major vault protein-alpha"/>
    <property type="match status" value="1"/>
</dbReference>
<dbReference type="FunFam" id="2.30.30.550:FF:000001">
    <property type="entry name" value="major vault protein-like"/>
    <property type="match status" value="3"/>
</dbReference>
<dbReference type="FunFam" id="2.30.30.560:FF:000001">
    <property type="entry name" value="major vault protein-like"/>
    <property type="match status" value="1"/>
</dbReference>
<dbReference type="FunFam" id="2.30.30.570:FF:000001">
    <property type="entry name" value="major vault protein-like"/>
    <property type="match status" value="1"/>
</dbReference>
<dbReference type="FunFam" id="3.30.479.30:FF:000010">
    <property type="entry name" value="major vault protein-like"/>
    <property type="match status" value="1"/>
</dbReference>
<dbReference type="Gene3D" id="2.30.30.560">
    <property type="match status" value="2"/>
</dbReference>
<dbReference type="Gene3D" id="2.30.30.570">
    <property type="match status" value="2"/>
</dbReference>
<dbReference type="Gene3D" id="2.30.30.620">
    <property type="match status" value="1"/>
</dbReference>
<dbReference type="Gene3D" id="6.10.250.720">
    <property type="match status" value="1"/>
</dbReference>
<dbReference type="Gene3D" id="6.20.380.10">
    <property type="match status" value="1"/>
</dbReference>
<dbReference type="Gene3D" id="3.30.479.30">
    <property type="entry name" value="Band 7 domain"/>
    <property type="match status" value="1"/>
</dbReference>
<dbReference type="Gene3D" id="2.30.30.550">
    <property type="entry name" value="Major Vault Protein repeat"/>
    <property type="match status" value="4"/>
</dbReference>
<dbReference type="InterPro" id="IPR036013">
    <property type="entry name" value="Band_7/SPFH_dom_sf"/>
</dbReference>
<dbReference type="InterPro" id="IPR039059">
    <property type="entry name" value="MVP"/>
</dbReference>
<dbReference type="InterPro" id="IPR041139">
    <property type="entry name" value="MVP_rep_dom"/>
</dbReference>
<dbReference type="InterPro" id="IPR043023">
    <property type="entry name" value="MVP_rep_sf"/>
</dbReference>
<dbReference type="InterPro" id="IPR021870">
    <property type="entry name" value="MVP_shoulder"/>
</dbReference>
<dbReference type="InterPro" id="IPR041134">
    <property type="entry name" value="Vault_2"/>
</dbReference>
<dbReference type="InterPro" id="IPR043179">
    <property type="entry name" value="Vault_2_sf"/>
</dbReference>
<dbReference type="InterPro" id="IPR040989">
    <property type="entry name" value="Vault_3"/>
</dbReference>
<dbReference type="InterPro" id="IPR041136">
    <property type="entry name" value="Vault_4"/>
</dbReference>
<dbReference type="InterPro" id="IPR002499">
    <property type="entry name" value="Vault_N"/>
</dbReference>
<dbReference type="PANTHER" id="PTHR14165">
    <property type="entry name" value="MAJOR VAULT PROTEIN"/>
    <property type="match status" value="1"/>
</dbReference>
<dbReference type="PANTHER" id="PTHR14165:SF3">
    <property type="entry name" value="MAJOR VAULT PROTEIN"/>
    <property type="match status" value="1"/>
</dbReference>
<dbReference type="Pfam" id="PF11978">
    <property type="entry name" value="MVP_shoulder"/>
    <property type="match status" value="1"/>
</dbReference>
<dbReference type="Pfam" id="PF01505">
    <property type="entry name" value="Vault"/>
    <property type="match status" value="4"/>
</dbReference>
<dbReference type="Pfam" id="PF17794">
    <property type="entry name" value="Vault_2"/>
    <property type="match status" value="1"/>
</dbReference>
<dbReference type="Pfam" id="PF17795">
    <property type="entry name" value="Vault_3"/>
    <property type="match status" value="1"/>
</dbReference>
<dbReference type="Pfam" id="PF17796">
    <property type="entry name" value="Vault_4"/>
    <property type="match status" value="1"/>
</dbReference>
<dbReference type="PROSITE" id="PS51224">
    <property type="entry name" value="MVP"/>
    <property type="match status" value="8"/>
</dbReference>
<proteinExistence type="inferred from homology"/>
<organism>
    <name type="scientific">Leishmania braziliensis</name>
    <dbReference type="NCBI Taxonomy" id="5660"/>
    <lineage>
        <taxon>Eukaryota</taxon>
        <taxon>Discoba</taxon>
        <taxon>Euglenozoa</taxon>
        <taxon>Kinetoplastea</taxon>
        <taxon>Metakinetoplastina</taxon>
        <taxon>Trypanosomatida</taxon>
        <taxon>Trypanosomatidae</taxon>
        <taxon>Leishmaniinae</taxon>
        <taxon>Leishmania</taxon>
        <taxon>Leishmania braziliensis species complex</taxon>
    </lineage>
</organism>
<reference evidence="4" key="1">
    <citation type="journal article" date="2007" name="Nat. Genet.">
        <title>Comparative genomic analysis of three Leishmania species that cause diverse human disease.</title>
        <authorList>
            <person name="Peacock C.S."/>
            <person name="Seeger K."/>
            <person name="Harris D."/>
            <person name="Murphy L."/>
            <person name="Ruiz J.C."/>
            <person name="Quail M.A."/>
            <person name="Peters N."/>
            <person name="Adlem E."/>
            <person name="Tivey A."/>
            <person name="Aslett M."/>
            <person name="Kerhornou A."/>
            <person name="Ivens A."/>
            <person name="Fraser A."/>
            <person name="Rajandream M.-A."/>
            <person name="Carver T."/>
            <person name="Norbertczak H."/>
            <person name="Chillingworth T."/>
            <person name="Hance Z."/>
            <person name="Jagels K."/>
            <person name="Moule S."/>
            <person name="Ormond D."/>
            <person name="Rutter S."/>
            <person name="Sqaures R."/>
            <person name="Whitehead S."/>
            <person name="Rabbinowitsch E."/>
            <person name="Arrowsmith C."/>
            <person name="White B."/>
            <person name="Thurston S."/>
            <person name="Bringaud F."/>
            <person name="Baldauf S.L."/>
            <person name="Faulconbridge A."/>
            <person name="Jeffares D."/>
            <person name="Depledge D.P."/>
            <person name="Oyola S.O."/>
            <person name="Hilley J.D."/>
            <person name="Brito L.O."/>
            <person name="Tosi L.R.O."/>
            <person name="Barrell B."/>
            <person name="Cruz A.K."/>
            <person name="Mottram J.C."/>
            <person name="Smith D.F."/>
            <person name="Berriman M."/>
        </authorList>
    </citation>
    <scope>NUCLEOTIDE SEQUENCE [LARGE SCALE GENOMIC DNA]</scope>
    <source>
        <strain evidence="4">MHOM/BR/75/M2904</strain>
    </source>
</reference>
<accession>A4H452</accession>
<keyword id="KW-0963">Cytoplasm</keyword>
<keyword id="KW-0539">Nucleus</keyword>
<keyword id="KW-0597">Phosphoprotein</keyword>
<keyword id="KW-1185">Reference proteome</keyword>
<keyword id="KW-0677">Repeat</keyword>
<keyword id="KW-0687">Ribonucleoprotein</keyword>
<evidence type="ECO:0000250" key="1">
    <source>
        <dbReference type="UniProtKB" id="Q14764"/>
    </source>
</evidence>
<evidence type="ECO:0000255" key="2"/>
<evidence type="ECO:0000255" key="3">
    <source>
        <dbReference type="PROSITE-ProRule" id="PRU00571"/>
    </source>
</evidence>
<evidence type="ECO:0000312" key="4">
    <source>
        <dbReference type="EMBL" id="CAM36840.1"/>
    </source>
</evidence>
<feature type="chain" id="PRO_0000414608" description="Major vault protein">
    <location>
        <begin position="1"/>
        <end position="833"/>
    </location>
</feature>
<feature type="repeat" description="MVP 1" evidence="2">
    <location>
        <begin position="10"/>
        <end position="52"/>
    </location>
</feature>
<feature type="repeat" description="MVP 2" evidence="2">
    <location>
        <begin position="54"/>
        <end position="115"/>
    </location>
</feature>
<feature type="repeat" description="MVP 3" evidence="2">
    <location>
        <begin position="119"/>
        <end position="170"/>
    </location>
</feature>
<feature type="repeat" description="MVP 4" evidence="2">
    <location>
        <begin position="171"/>
        <end position="223"/>
    </location>
</feature>
<feature type="repeat" description="MVP 5" evidence="2">
    <location>
        <begin position="224"/>
        <end position="278"/>
    </location>
</feature>
<feature type="repeat" description="MVP 6" evidence="2">
    <location>
        <begin position="280"/>
        <end position="328"/>
    </location>
</feature>
<feature type="repeat" description="MVP 7" evidence="2">
    <location>
        <begin position="329"/>
        <end position="380"/>
    </location>
</feature>
<feature type="repeat" description="MVP 8" evidence="2">
    <location>
        <begin position="381"/>
        <end position="433"/>
    </location>
</feature>
<comment type="function">
    <text evidence="1">Required for normal vault structure. Vaults are multi-subunit structures that may act as scaffolds for proteins involved in signal transduction. Vaults may also play a role in nucleo-cytoplasmic transport (By similarity).</text>
</comment>
<comment type="subunit">
    <text evidence="1">The vault ribonucleoprotein particle is a huge (400 A x 670 A) cage structure of 12.9 MDa. It consists of a dimer of half-vaults, with each half-vault comprising 39 identical major vault protein (MVP) chains, PARP4 and one or more vault RNAs (vRNAs) (By similarity).</text>
</comment>
<comment type="subcellular location">
    <subcellularLocation>
        <location evidence="1 3">Cytoplasm</location>
    </subcellularLocation>
    <subcellularLocation>
        <location evidence="1">Nucleus</location>
    </subcellularLocation>
</comment>
<sequence>MTDSVIRIKRYYYIHILDNNTNVTRTISGPVVYTRQEHETCLFDPRPCVSVPPRHYCVVKNPCVRNEAGEVVLESSGQVKLRLGDAEIRFEGEPFPLYPGEELDSKEEQSVRKLQVIPPNTGLHVRCVRDFKDAERLVVAGTEWMVAGPQSYIPRVEVAVVEEVKATVIYPNTALLLQANVNFTDRRGVLRVAGEKWLVRTLGAYLPSVEETVVSLIQGTMLSELKALRLSAVRSFTDVYGKARRAGEQWQVTLKDAPVHIVDAYETKVAEVAAVSLNAKEYVIIHHPVDATGHNRFGETLVRRGECTFFLQPEETMPRGVEQVLVVGKEEALLLEAVCEYHDGGGKHQPGSRWMVRGPCEYIPANEVKLLEHRRVMALDRNEGIYVMNTTTGEVRAVIGKPYMLDSNEVLWEKHLPLAIEELLESPNGSIKTCERNAGFVSRREKYRIVRFNVQHNAAVQIYDYRTKKPRIVLGPSLVMLAPHEEFTVLSLSGGTPKVPNSMQSLQLFLGPRFSSDTIVVETSDHARLRLRLSYNWYFDIDRANPSQRTFSVPDFIGDCCKTIASRVRGAVAAEDFDSFHRNSAKIIRIAVFGVDEVGEAKKNLRFNANDFVVTNIDVQSAEPTDEKTRDSLQKSVQLAIEITTKSQEAAARHGNELKNQEAKGHLERQKLIDKIEVENARTKWLELQAKSEAVQASGQSIAEAKARAEALLIEVQSEMQQAEMRAKAYRISAEAELQKLQQRQALELEYTQRQNEIDVAKARAAAEAEAEKVRRMVDAIGRDTLVAIARAGPEAQVKLLGSLGLKGYLITDGNSPVNLFDAAHGMIGEPKK</sequence>